<proteinExistence type="evidence at protein level"/>
<gene>
    <name evidence="3" type="primary">nit1</name>
    <name type="ORF">CH48_2098</name>
</gene>
<accession>P0DP68</accession>
<comment type="function">
    <text evidence="2">Hydrolyzes deaminated glutathione (dGSH, 2-oxoglutaramate) to alpha-ketoglutarate (alpha-KG) and cysteinylglycine (specific activity 6.50 umol/min/mg), has less activity against alpha-ketoglutaramate (a-KGM, specific activity 0.20 umol/min/mg), very little activity on glutathione and none on L-glutamine. May function as a metabolite repair enzyme.</text>
</comment>
<comment type="catalytic activity">
    <reaction evidence="2">
        <text>N-(4-oxoglutaryl)-L-cysteinylglycine + H2O = L-cysteinylglycine + 2-oxoglutarate</text>
        <dbReference type="Rhea" id="RHEA:54532"/>
        <dbReference type="ChEBI" id="CHEBI:15377"/>
        <dbReference type="ChEBI" id="CHEBI:16810"/>
        <dbReference type="ChEBI" id="CHEBI:61694"/>
        <dbReference type="ChEBI" id="CHEBI:138256"/>
        <dbReference type="EC" id="3.5.1.128"/>
    </reaction>
</comment>
<comment type="similarity">
    <text evidence="4">Belongs to the carbon-nitrogen hydrolase superfamily. NIT1/NIT2 family.</text>
</comment>
<reference key="1">
    <citation type="submission" date="2014-11" db="EMBL/GenBank/DDBJ databases">
        <authorList>
            <person name="Davenport K.W."/>
            <person name="Bishop-Lilly K.A."/>
            <person name="Broomall S.M."/>
            <person name="Chain P.S."/>
            <person name="Chertkov O."/>
            <person name="Coyne S.R."/>
            <person name="Daligault H.E."/>
            <person name="Erkkila T."/>
            <person name="Frey K.G."/>
            <person name="Gibbons H.S."/>
            <person name="Gu W."/>
            <person name="Jaissle J."/>
            <person name="Johnson S.L."/>
            <person name="Koroleva G.I."/>
            <person name="Ladner J.T."/>
            <person name="Lo C.-C."/>
            <person name="Minogue T.D."/>
            <person name="Munk C."/>
            <person name="Palacios G.F."/>
            <person name="Redden C.L."/>
            <person name="Rosenzweig C.N."/>
            <person name="Scholz M.B."/>
            <person name="Teshima H."/>
            <person name="Xu Y."/>
        </authorList>
    </citation>
    <scope>NUCLEOTIDE SEQUENCE [LARGE SCALE GENOMIC DNA]</scope>
    <source>
        <strain>2516-87</strain>
    </source>
</reference>
<reference key="2">
    <citation type="journal article" date="2017" name="Proc. Natl. Acad. Sci. U.S.A.">
        <title>Nit1 is a metabolite repair enzyme that hydrolyzes deaminated glutathione.</title>
        <authorList>
            <person name="Peracchi A."/>
            <person name="Veiga-da-Cunha M."/>
            <person name="Kuhara T."/>
            <person name="Ellens K.W."/>
            <person name="Paczia N."/>
            <person name="Stroobant V."/>
            <person name="Seliga A.K."/>
            <person name="Marlaire S."/>
            <person name="Jaisson S."/>
            <person name="Bommer G.T."/>
            <person name="Sun J."/>
            <person name="Huebner K."/>
            <person name="Linster C.L."/>
            <person name="Cooper A.J.L."/>
            <person name="Van Schaftingen E."/>
        </authorList>
    </citation>
    <scope>FUNCTION</scope>
    <scope>CATALYTIC ACTIVITY</scope>
    <source>
        <strain>2516-87</strain>
    </source>
</reference>
<dbReference type="EC" id="3.5.1.128" evidence="2"/>
<dbReference type="EMBL" id="CP009838">
    <property type="protein sequence ID" value="AJJ28584.1"/>
    <property type="molecule type" value="Genomic_DNA"/>
</dbReference>
<dbReference type="RefSeq" id="WP_005163159.1">
    <property type="nucleotide sequence ID" value="NZ_WJHZ01000084.1"/>
</dbReference>
<dbReference type="SMR" id="P0DP68"/>
<dbReference type="STRING" id="1443113.LC20_00606"/>
<dbReference type="GeneID" id="31410688"/>
<dbReference type="KEGG" id="yet:CH48_2098"/>
<dbReference type="eggNOG" id="COG0388">
    <property type="taxonomic scope" value="Bacteria"/>
</dbReference>
<dbReference type="OMA" id="MQSKPYA"/>
<dbReference type="BRENDA" id="3.5.1.128">
    <property type="organism ID" value="6741"/>
</dbReference>
<dbReference type="GO" id="GO:0110050">
    <property type="term" value="F:deaminated glutathione amidase activity"/>
    <property type="evidence" value="ECO:0007669"/>
    <property type="project" value="UniProtKB-EC"/>
</dbReference>
<dbReference type="CDD" id="cd07572">
    <property type="entry name" value="nit"/>
    <property type="match status" value="1"/>
</dbReference>
<dbReference type="Gene3D" id="3.60.110.10">
    <property type="entry name" value="Carbon-nitrogen hydrolase"/>
    <property type="match status" value="1"/>
</dbReference>
<dbReference type="InterPro" id="IPR003010">
    <property type="entry name" value="C-N_Hydrolase"/>
</dbReference>
<dbReference type="InterPro" id="IPR036526">
    <property type="entry name" value="C-N_Hydrolase_sf"/>
</dbReference>
<dbReference type="InterPro" id="IPR045254">
    <property type="entry name" value="Nit1/2_C-N_Hydrolase"/>
</dbReference>
<dbReference type="InterPro" id="IPR050027">
    <property type="entry name" value="Nit1_Morganellaceae"/>
</dbReference>
<dbReference type="InterPro" id="IPR001110">
    <property type="entry name" value="UPF0012_CS"/>
</dbReference>
<dbReference type="NCBIfam" id="NF043013">
    <property type="entry name" value="DeGluthAmidYersProt"/>
    <property type="match status" value="1"/>
</dbReference>
<dbReference type="PANTHER" id="PTHR23088:SF27">
    <property type="entry name" value="DEAMINATED GLUTATHIONE AMIDASE"/>
    <property type="match status" value="1"/>
</dbReference>
<dbReference type="PANTHER" id="PTHR23088">
    <property type="entry name" value="NITRILASE-RELATED"/>
    <property type="match status" value="1"/>
</dbReference>
<dbReference type="Pfam" id="PF00795">
    <property type="entry name" value="CN_hydrolase"/>
    <property type="match status" value="1"/>
</dbReference>
<dbReference type="SUPFAM" id="SSF56317">
    <property type="entry name" value="Carbon-nitrogen hydrolase"/>
    <property type="match status" value="1"/>
</dbReference>
<dbReference type="PROSITE" id="PS50263">
    <property type="entry name" value="CN_HYDROLASE"/>
    <property type="match status" value="1"/>
</dbReference>
<dbReference type="PROSITE" id="PS01227">
    <property type="entry name" value="UPF0012"/>
    <property type="match status" value="1"/>
</dbReference>
<keyword id="KW-0378">Hydrolase</keyword>
<feature type="chain" id="PRO_0000440697" description="Deaminated glutathione amidase">
    <location>
        <begin position="1"/>
        <end position="286"/>
    </location>
</feature>
<feature type="domain" description="CN hydrolase" evidence="1">
    <location>
        <begin position="4"/>
        <end position="252"/>
    </location>
</feature>
<feature type="active site" description="Proton acceptor" evidence="1">
    <location>
        <position position="42"/>
    </location>
</feature>
<feature type="active site" evidence="1">
    <location>
        <position position="115"/>
    </location>
</feature>
<feature type="active site" description="Nucleophile" evidence="1">
    <location>
        <position position="157"/>
    </location>
</feature>
<name>NIT1_YEREN</name>
<sequence>MKNANVALLQLCSGENTRDNLAQIEQQIKQLNSGIQLVMTPENALLFANAASYRHHAEQHNDGPLQQEVREMARRYGVWIQVGSMPMISRESPDLITTSSLLFDSQGELKARYDKIHMFDVDIKDIHGRYRESDTYQPGEHLTVADTPVGRLGMTVCYDLRFPGLFQALRAQGAEIISVPAAFTKVTGEAHWEILLRARAIENQCVILAAAQVGRHGATRRTWGHTMAVDAWGKIIGQNPDAVSALKVKIETTGLKTIRNQMPVLQHNRFVSSLVPRLSDSKQSSK</sequence>
<evidence type="ECO:0000255" key="1">
    <source>
        <dbReference type="PROSITE-ProRule" id="PRU00054"/>
    </source>
</evidence>
<evidence type="ECO:0000269" key="2">
    <source>
    </source>
</evidence>
<evidence type="ECO:0000303" key="3">
    <source>
    </source>
</evidence>
<evidence type="ECO:0000305" key="4"/>
<organism>
    <name type="scientific">Yersinia enterocolitica</name>
    <dbReference type="NCBI Taxonomy" id="630"/>
    <lineage>
        <taxon>Bacteria</taxon>
        <taxon>Pseudomonadati</taxon>
        <taxon>Pseudomonadota</taxon>
        <taxon>Gammaproteobacteria</taxon>
        <taxon>Enterobacterales</taxon>
        <taxon>Yersiniaceae</taxon>
        <taxon>Yersinia</taxon>
    </lineage>
</organism>
<protein>
    <recommendedName>
        <fullName evidence="4">Deaminated glutathione amidase</fullName>
        <shortName evidence="4">dGSH amidase</shortName>
        <ecNumber evidence="2">3.5.1.128</ecNumber>
    </recommendedName>
    <alternativeName>
        <fullName>Nitrilase homolog 1</fullName>
        <shortName evidence="3">yeNit1</shortName>
    </alternativeName>
</protein>